<keyword id="KW-0238">DNA-binding</keyword>
<keyword id="KW-1017">Isopeptide bond</keyword>
<keyword id="KW-0479">Metal-binding</keyword>
<keyword id="KW-0539">Nucleus</keyword>
<keyword id="KW-1267">Proteomics identification</keyword>
<keyword id="KW-1185">Reference proteome</keyword>
<keyword id="KW-0677">Repeat</keyword>
<keyword id="KW-0804">Transcription</keyword>
<keyword id="KW-0805">Transcription regulation</keyword>
<keyword id="KW-0832">Ubl conjugation</keyword>
<keyword id="KW-0862">Zinc</keyword>
<keyword id="KW-0863">Zinc-finger</keyword>
<organism>
    <name type="scientific">Homo sapiens</name>
    <name type="common">Human</name>
    <dbReference type="NCBI Taxonomy" id="9606"/>
    <lineage>
        <taxon>Eukaryota</taxon>
        <taxon>Metazoa</taxon>
        <taxon>Chordata</taxon>
        <taxon>Craniata</taxon>
        <taxon>Vertebrata</taxon>
        <taxon>Euteleostomi</taxon>
        <taxon>Mammalia</taxon>
        <taxon>Eutheria</taxon>
        <taxon>Euarchontoglires</taxon>
        <taxon>Primates</taxon>
        <taxon>Haplorrhini</taxon>
        <taxon>Catarrhini</taxon>
        <taxon>Hominidae</taxon>
        <taxon>Homo</taxon>
    </lineage>
</organism>
<dbReference type="EMBL" id="X84801">
    <property type="protein sequence ID" value="CAA59268.1"/>
    <property type="molecule type" value="mRNA"/>
</dbReference>
<dbReference type="EMBL" id="U78722">
    <property type="protein sequence ID" value="AAC51658.1"/>
    <property type="molecule type" value="mRNA"/>
</dbReference>
<dbReference type="EMBL" id="U88086">
    <property type="protein sequence ID" value="AAD04755.1"/>
    <property type="molecule type" value="Genomic_DNA"/>
</dbReference>
<dbReference type="EMBL" id="U88084">
    <property type="protein sequence ID" value="AAD04755.1"/>
    <property type="status" value="JOINED"/>
    <property type="molecule type" value="Genomic_DNA"/>
</dbReference>
<dbReference type="EMBL" id="U88085">
    <property type="protein sequence ID" value="AAD04755.1"/>
    <property type="status" value="JOINED"/>
    <property type="molecule type" value="Genomic_DNA"/>
</dbReference>
<dbReference type="EMBL" id="AL121944">
    <property type="status" value="NOT_ANNOTATED_CDS"/>
    <property type="molecule type" value="Genomic_DNA"/>
</dbReference>
<dbReference type="EMBL" id="BC026092">
    <property type="protein sequence ID" value="AAH26092.1"/>
    <property type="molecule type" value="mRNA"/>
</dbReference>
<dbReference type="CCDS" id="CCDS4643.1"/>
<dbReference type="PIR" id="S52411">
    <property type="entry name" value="S52411"/>
</dbReference>
<dbReference type="RefSeq" id="NP_001363420.1">
    <property type="nucleotide sequence ID" value="NM_001376491.1"/>
</dbReference>
<dbReference type="RefSeq" id="NP_001363421.1">
    <property type="nucleotide sequence ID" value="NM_001376492.1"/>
</dbReference>
<dbReference type="RefSeq" id="NP_001363422.1">
    <property type="nucleotide sequence ID" value="NM_001376493.1"/>
</dbReference>
<dbReference type="RefSeq" id="NP_003438.1">
    <property type="nucleotide sequence ID" value="NM_003447.4"/>
</dbReference>
<dbReference type="RefSeq" id="XP_016866747.1">
    <property type="nucleotide sequence ID" value="XM_017011258.1"/>
</dbReference>
<dbReference type="RefSeq" id="XP_016866748.1">
    <property type="nucleotide sequence ID" value="XM_017011259.1"/>
</dbReference>
<dbReference type="RefSeq" id="XP_016866749.1">
    <property type="nucleotide sequence ID" value="XM_017011260.1"/>
</dbReference>
<dbReference type="SMR" id="P49910"/>
<dbReference type="BioGRID" id="113511">
    <property type="interactions" value="50"/>
</dbReference>
<dbReference type="FunCoup" id="P49910">
    <property type="interactions" value="25"/>
</dbReference>
<dbReference type="IntAct" id="P49910">
    <property type="interactions" value="42"/>
</dbReference>
<dbReference type="MINT" id="P49910"/>
<dbReference type="STRING" id="9606.ENSP00000366542"/>
<dbReference type="iPTMnet" id="P49910"/>
<dbReference type="PhosphoSitePlus" id="P49910"/>
<dbReference type="BioMuta" id="ZNF165"/>
<dbReference type="DMDM" id="1731420"/>
<dbReference type="jPOST" id="P49910"/>
<dbReference type="MassIVE" id="P49910"/>
<dbReference type="PaxDb" id="9606-ENSP00000366542"/>
<dbReference type="PeptideAtlas" id="P49910"/>
<dbReference type="ProteomicsDB" id="56177"/>
<dbReference type="ABCD" id="P49910">
    <property type="antibodies" value="9 sequenced antibodies"/>
</dbReference>
<dbReference type="Antibodypedia" id="25827">
    <property type="antibodies" value="200 antibodies from 22 providers"/>
</dbReference>
<dbReference type="DNASU" id="7718"/>
<dbReference type="Ensembl" id="ENST00000377325.2">
    <property type="protein sequence ID" value="ENSP00000366542.1"/>
    <property type="gene ID" value="ENSG00000197279.5"/>
</dbReference>
<dbReference type="Ensembl" id="ENST00000683778.1">
    <property type="protein sequence ID" value="ENSP00000507525.1"/>
    <property type="gene ID" value="ENSG00000197279.5"/>
</dbReference>
<dbReference type="GeneID" id="7718"/>
<dbReference type="KEGG" id="hsa:7718"/>
<dbReference type="MANE-Select" id="ENST00000683778.1">
    <property type="protein sequence ID" value="ENSP00000507525.1"/>
    <property type="RefSeq nucleotide sequence ID" value="NM_001376491.1"/>
    <property type="RefSeq protein sequence ID" value="NP_001363420.1"/>
</dbReference>
<dbReference type="AGR" id="HGNC:12953"/>
<dbReference type="CTD" id="7718"/>
<dbReference type="DisGeNET" id="7718"/>
<dbReference type="GeneCards" id="ZNF165"/>
<dbReference type="HGNC" id="HGNC:12953">
    <property type="gene designation" value="ZNF165"/>
</dbReference>
<dbReference type="HPA" id="ENSG00000197279">
    <property type="expression patterns" value="Tissue enhanced (testis)"/>
</dbReference>
<dbReference type="MIM" id="600834">
    <property type="type" value="gene"/>
</dbReference>
<dbReference type="neXtProt" id="NX_P49910"/>
<dbReference type="OpenTargets" id="ENSG00000197279"/>
<dbReference type="PharmGKB" id="PA37535"/>
<dbReference type="VEuPathDB" id="HostDB:ENSG00000197279"/>
<dbReference type="eggNOG" id="KOG1721">
    <property type="taxonomic scope" value="Eukaryota"/>
</dbReference>
<dbReference type="GeneTree" id="ENSGT00940000163388"/>
<dbReference type="HOGENOM" id="CLU_002678_49_3_1"/>
<dbReference type="InParanoid" id="P49910"/>
<dbReference type="OMA" id="QVQAHEH"/>
<dbReference type="OrthoDB" id="6365676at2759"/>
<dbReference type="PAN-GO" id="P49910">
    <property type="GO annotations" value="3 GO annotations based on evolutionary models"/>
</dbReference>
<dbReference type="PhylomeDB" id="P49910"/>
<dbReference type="TreeFam" id="TF338304"/>
<dbReference type="PathwayCommons" id="P49910"/>
<dbReference type="SignaLink" id="P49910"/>
<dbReference type="SIGNOR" id="P49910"/>
<dbReference type="BioGRID-ORCS" id="7718">
    <property type="hits" value="18 hits in 1177 CRISPR screens"/>
</dbReference>
<dbReference type="ChiTaRS" id="ZNF165">
    <property type="organism name" value="human"/>
</dbReference>
<dbReference type="GeneWiki" id="Zinc_finger_protein_165"/>
<dbReference type="GenomeRNAi" id="7718"/>
<dbReference type="Pharos" id="P49910">
    <property type="development level" value="Tbio"/>
</dbReference>
<dbReference type="PRO" id="PR:P49910"/>
<dbReference type="Proteomes" id="UP000005640">
    <property type="component" value="Chromosome 6"/>
</dbReference>
<dbReference type="RNAct" id="P49910">
    <property type="molecule type" value="protein"/>
</dbReference>
<dbReference type="Bgee" id="ENSG00000197279">
    <property type="expression patterns" value="Expressed in sperm and 132 other cell types or tissues"/>
</dbReference>
<dbReference type="ExpressionAtlas" id="P49910">
    <property type="expression patterns" value="baseline and differential"/>
</dbReference>
<dbReference type="GO" id="GO:0005634">
    <property type="term" value="C:nucleus"/>
    <property type="evidence" value="ECO:0007669"/>
    <property type="project" value="UniProtKB-SubCell"/>
</dbReference>
<dbReference type="GO" id="GO:0000981">
    <property type="term" value="F:DNA-binding transcription factor activity, RNA polymerase II-specific"/>
    <property type="evidence" value="ECO:0000318"/>
    <property type="project" value="GO_Central"/>
</dbReference>
<dbReference type="GO" id="GO:0000978">
    <property type="term" value="F:RNA polymerase II cis-regulatory region sequence-specific DNA binding"/>
    <property type="evidence" value="ECO:0000318"/>
    <property type="project" value="GO_Central"/>
</dbReference>
<dbReference type="GO" id="GO:0008270">
    <property type="term" value="F:zinc ion binding"/>
    <property type="evidence" value="ECO:0007669"/>
    <property type="project" value="UniProtKB-KW"/>
</dbReference>
<dbReference type="GO" id="GO:0006357">
    <property type="term" value="P:regulation of transcription by RNA polymerase II"/>
    <property type="evidence" value="ECO:0000318"/>
    <property type="project" value="GO_Central"/>
</dbReference>
<dbReference type="CDD" id="cd07936">
    <property type="entry name" value="SCAN"/>
    <property type="match status" value="1"/>
</dbReference>
<dbReference type="FunFam" id="3.30.160.60:FF:001339">
    <property type="entry name" value="Zinc finger protein 232"/>
    <property type="match status" value="1"/>
</dbReference>
<dbReference type="FunFam" id="3.30.160.60:FF:000944">
    <property type="entry name" value="zinc finger protein 232 isoform X1"/>
    <property type="match status" value="1"/>
</dbReference>
<dbReference type="FunFam" id="1.10.4020.10:FF:000001">
    <property type="entry name" value="zinc finger protein 263 isoform X1"/>
    <property type="match status" value="1"/>
</dbReference>
<dbReference type="FunFam" id="3.30.160.60:FF:000352">
    <property type="entry name" value="zinc finger protein 3 homolog"/>
    <property type="match status" value="1"/>
</dbReference>
<dbReference type="FunFam" id="3.30.160.60:FF:000016">
    <property type="entry name" value="zinc finger protein 37 homolog"/>
    <property type="match status" value="1"/>
</dbReference>
<dbReference type="FunFam" id="3.30.160.60:FF:002134">
    <property type="entry name" value="Zinc finger protein 616"/>
    <property type="match status" value="1"/>
</dbReference>
<dbReference type="Gene3D" id="3.30.160.60">
    <property type="entry name" value="Classic Zinc Finger"/>
    <property type="match status" value="5"/>
</dbReference>
<dbReference type="Gene3D" id="1.10.4020.10">
    <property type="entry name" value="DNA breaking-rejoining enzymes"/>
    <property type="match status" value="1"/>
</dbReference>
<dbReference type="InterPro" id="IPR003309">
    <property type="entry name" value="SCAN_dom"/>
</dbReference>
<dbReference type="InterPro" id="IPR038269">
    <property type="entry name" value="SCAN_sf"/>
</dbReference>
<dbReference type="InterPro" id="IPR036236">
    <property type="entry name" value="Znf_C2H2_sf"/>
</dbReference>
<dbReference type="InterPro" id="IPR013087">
    <property type="entry name" value="Znf_C2H2_type"/>
</dbReference>
<dbReference type="PANTHER" id="PTHR14003">
    <property type="entry name" value="TRANSCRIPTIONAL REPRESSOR PROTEIN YY"/>
    <property type="match status" value="1"/>
</dbReference>
<dbReference type="PANTHER" id="PTHR14003:SF23">
    <property type="entry name" value="ZINC FINGER PROTEIN 143"/>
    <property type="match status" value="1"/>
</dbReference>
<dbReference type="Pfam" id="PF02023">
    <property type="entry name" value="SCAN"/>
    <property type="match status" value="1"/>
</dbReference>
<dbReference type="Pfam" id="PF00096">
    <property type="entry name" value="zf-C2H2"/>
    <property type="match status" value="5"/>
</dbReference>
<dbReference type="SMART" id="SM00431">
    <property type="entry name" value="SCAN"/>
    <property type="match status" value="1"/>
</dbReference>
<dbReference type="SMART" id="SM00355">
    <property type="entry name" value="ZnF_C2H2"/>
    <property type="match status" value="6"/>
</dbReference>
<dbReference type="SUPFAM" id="SSF57667">
    <property type="entry name" value="beta-beta-alpha zinc fingers"/>
    <property type="match status" value="3"/>
</dbReference>
<dbReference type="SUPFAM" id="SSF47353">
    <property type="entry name" value="Retrovirus capsid dimerization domain-like"/>
    <property type="match status" value="1"/>
</dbReference>
<dbReference type="PROSITE" id="PS50804">
    <property type="entry name" value="SCAN_BOX"/>
    <property type="match status" value="1"/>
</dbReference>
<dbReference type="PROSITE" id="PS00028">
    <property type="entry name" value="ZINC_FINGER_C2H2_1"/>
    <property type="match status" value="5"/>
</dbReference>
<dbReference type="PROSITE" id="PS50157">
    <property type="entry name" value="ZINC_FINGER_C2H2_2"/>
    <property type="match status" value="6"/>
</dbReference>
<name>ZN165_HUMAN</name>
<evidence type="ECO:0000255" key="1">
    <source>
        <dbReference type="PROSITE-ProRule" id="PRU00042"/>
    </source>
</evidence>
<evidence type="ECO:0000255" key="2">
    <source>
        <dbReference type="PROSITE-ProRule" id="PRU00187"/>
    </source>
</evidence>
<evidence type="ECO:0000305" key="3"/>
<evidence type="ECO:0007744" key="4">
    <source>
    </source>
</evidence>
<sequence>MATEPKKAAAQNSPEDEGLLIVKIEEEEFIHGQDTCLQRSELLKQELCRQLFRQFCYQDSPGPREALSRLRELCCQWLKPEIHTKEQILELLVLEQFLTILPGDLQAWVHEHYPESGEEAVTILEDLERGTDEAVLQVQAHEHGQEIFQKKVSPPGPALNVKLQPVETKAHFDSSEPQLLWDCDNESENSRSMPKLEIFEKIESQRIISGRISGYISEASGESQDICKSAGRVKRQWEKESGESQRLSSAQDEGFGKILTHKNTVRGEIISHDGCERRLNLNSNEFTHQKSCKHGTCDQSFKWNSDFINHQIIYAGEKNHQYGKSFKSPKLAKHAAVFSGDKTHQCNECGKAFRHSSKLARHQRIHTGERCYECNECGKSFAESSDLTRHRRIHTGERPFGCKECGRAFNLNSHLIRHQRIHTREKPYECSECGKTFRVSSHLIRHFRIHTGEKPYECSECGRAFSQSSNLSQHQRIHMRENLLM</sequence>
<comment type="function">
    <text>May be involved in transcriptional regulation.</text>
</comment>
<comment type="interaction">
    <interactant intactId="EBI-741694">
        <id>P49910</id>
    </interactant>
    <interactant intactId="EBI-2371423">
        <id>O43865</id>
        <label>AHCYL1</label>
    </interactant>
    <organismsDiffer>false</organismsDiffer>
    <experiments>3</experiments>
</comment>
<comment type="interaction">
    <interactant intactId="EBI-741694">
        <id>P49910</id>
    </interactant>
    <interactant intactId="EBI-3866279">
        <id>Q9BWT7</id>
        <label>CARD10</label>
    </interactant>
    <organismsDiffer>false</organismsDiffer>
    <experiments>3</experiments>
</comment>
<comment type="interaction">
    <interactant intactId="EBI-741694">
        <id>P49910</id>
    </interactant>
    <interactant intactId="EBI-11977221">
        <id>Q86Z20</id>
        <label>CCDC125</label>
    </interactant>
    <organismsDiffer>false</organismsDiffer>
    <experiments>3</experiments>
</comment>
<comment type="interaction">
    <interactant intactId="EBI-741694">
        <id>P49910</id>
    </interactant>
    <interactant intactId="EBI-739624">
        <id>Q8NHQ1</id>
        <label>CEP70</label>
    </interactant>
    <organismsDiffer>false</organismsDiffer>
    <experiments>3</experiments>
</comment>
<comment type="interaction">
    <interactant intactId="EBI-741694">
        <id>P49910</id>
    </interactant>
    <interactant intactId="EBI-3867333">
        <id>A8MQ03</id>
        <label>CYSRT1</label>
    </interactant>
    <organismsDiffer>false</organismsDiffer>
    <experiments>3</experiments>
</comment>
<comment type="interaction">
    <interactant intactId="EBI-741694">
        <id>P49910</id>
    </interactant>
    <interactant intactId="EBI-10976677">
        <id>G5E9A7</id>
        <label>DMWD</label>
    </interactant>
    <organismsDiffer>false</organismsDiffer>
    <experiments>3</experiments>
</comment>
<comment type="interaction">
    <interactant intactId="EBI-741694">
        <id>P49910</id>
    </interactant>
    <interactant intactId="EBI-740850">
        <id>O14641</id>
        <label>DVL2</label>
    </interactant>
    <organismsDiffer>false</organismsDiffer>
    <experiments>3</experiments>
</comment>
<comment type="interaction">
    <interactant intactId="EBI-741694">
        <id>P49910</id>
    </interactant>
    <interactant intactId="EBI-739789">
        <id>Q92997</id>
        <label>DVL3</label>
    </interactant>
    <organismsDiffer>false</organismsDiffer>
    <experiments>3</experiments>
</comment>
<comment type="interaction">
    <interactant intactId="EBI-741694">
        <id>P49910</id>
    </interactant>
    <interactant intactId="EBI-489887">
        <id>P50402</id>
        <label>EMD</label>
    </interactant>
    <organismsDiffer>false</organismsDiffer>
    <experiments>3</experiments>
</comment>
<comment type="interaction">
    <interactant intactId="EBI-741694">
        <id>P49910</id>
    </interactant>
    <interactant intactId="EBI-739737">
        <id>Q01844</id>
        <label>EWSR1</label>
    </interactant>
    <organismsDiffer>false</organismsDiffer>
    <experiments>2</experiments>
</comment>
<comment type="interaction">
    <interactant intactId="EBI-741694">
        <id>P49910</id>
    </interactant>
    <interactant intactId="EBI-5916454">
        <id>A6NEM1</id>
        <label>GOLGA6L9</label>
    </interactant>
    <organismsDiffer>false</organismsDiffer>
    <experiments>3</experiments>
</comment>
<comment type="interaction">
    <interactant intactId="EBI-741694">
        <id>P49910</id>
    </interactant>
    <interactant intactId="EBI-17178971">
        <id>Q14005-2</id>
        <label>IL16</label>
    </interactant>
    <organismsDiffer>false</organismsDiffer>
    <experiments>3</experiments>
</comment>
<comment type="interaction">
    <interactant intactId="EBI-741694">
        <id>P49910</id>
    </interactant>
    <interactant intactId="EBI-10171774">
        <id>P60410</id>
        <label>KRTAP10-8</label>
    </interactant>
    <organismsDiffer>false</organismsDiffer>
    <experiments>3</experiments>
</comment>
<comment type="interaction">
    <interactant intactId="EBI-741694">
        <id>P49910</id>
    </interactant>
    <interactant intactId="EBI-10172052">
        <id>P60411</id>
        <label>KRTAP10-9</label>
    </interactant>
    <organismsDiffer>false</organismsDiffer>
    <experiments>3</experiments>
</comment>
<comment type="interaction">
    <interactant intactId="EBI-741694">
        <id>P49910</id>
    </interactant>
    <interactant intactId="EBI-14065470">
        <id>Q9BYR9</id>
        <label>KRTAP2-4</label>
    </interactant>
    <organismsDiffer>false</organismsDiffer>
    <experiments>3</experiments>
</comment>
<comment type="interaction">
    <interactant intactId="EBI-741694">
        <id>P49910</id>
    </interactant>
    <interactant intactId="EBI-10268010">
        <id>Q8N8X9</id>
        <label>MAB21L3</label>
    </interactant>
    <organismsDiffer>false</organismsDiffer>
    <experiments>3</experiments>
</comment>
<comment type="interaction">
    <interactant intactId="EBI-741694">
        <id>P49910</id>
    </interactant>
    <interactant intactId="EBI-10172526">
        <id>Q9UJV3-2</id>
        <label>MID2</label>
    </interactant>
    <organismsDiffer>false</organismsDiffer>
    <experiments>3</experiments>
</comment>
<comment type="interaction">
    <interactant intactId="EBI-741694">
        <id>P49910</id>
    </interactant>
    <interactant intactId="EBI-741158">
        <id>Q96HA8</id>
        <label>NTAQ1</label>
    </interactant>
    <organismsDiffer>false</organismsDiffer>
    <experiments>3</experiments>
</comment>
<comment type="interaction">
    <interactant intactId="EBI-741694">
        <id>P49910</id>
    </interactant>
    <interactant intactId="EBI-79165">
        <id>Q9NRD5</id>
        <label>PICK1</label>
    </interactant>
    <organismsDiffer>false</organismsDiffer>
    <experiments>3</experiments>
</comment>
<comment type="interaction">
    <interactant intactId="EBI-741694">
        <id>P49910</id>
    </interactant>
    <interactant intactId="EBI-742388">
        <id>Q9H8W4</id>
        <label>PLEKHF2</label>
    </interactant>
    <organismsDiffer>false</organismsDiffer>
    <experiments>3</experiments>
</comment>
<comment type="interaction">
    <interactant intactId="EBI-741694">
        <id>P49910</id>
    </interactant>
    <interactant intactId="EBI-368321">
        <id>O60437</id>
        <label>PPL</label>
    </interactant>
    <organismsDiffer>false</organismsDiffer>
    <experiments>3</experiments>
</comment>
<comment type="interaction">
    <interactant intactId="EBI-741694">
        <id>P49910</id>
    </interactant>
    <interactant intactId="EBI-395959">
        <id>Q15287</id>
        <label>RNPS1</label>
    </interactant>
    <organismsDiffer>false</organismsDiffer>
    <experiments>3</experiments>
</comment>
<comment type="interaction">
    <interactant intactId="EBI-741694">
        <id>P49910</id>
    </interactant>
    <interactant intactId="EBI-745846">
        <id>P57086</id>
        <label>SCAND1</label>
    </interactant>
    <organismsDiffer>false</organismsDiffer>
    <experiments>11</experiments>
</comment>
<comment type="interaction">
    <interactant intactId="EBI-741694">
        <id>P49910</id>
    </interactant>
    <interactant intactId="EBI-5235340">
        <id>Q7Z699</id>
        <label>SPRED1</label>
    </interactant>
    <organismsDiffer>false</organismsDiffer>
    <experiments>3</experiments>
</comment>
<comment type="interaction">
    <interactant intactId="EBI-741694">
        <id>P49910</id>
    </interactant>
    <interactant intactId="EBI-725997">
        <id>Q8WV44</id>
        <label>TRIM41</label>
    </interactant>
    <organismsDiffer>false</organismsDiffer>
    <experiments>3</experiments>
</comment>
<comment type="interaction">
    <interactant intactId="EBI-741694">
        <id>P49910</id>
    </interactant>
    <interactant intactId="EBI-716093">
        <id>P13994</id>
        <label>YJU2B</label>
    </interactant>
    <organismsDiffer>false</organismsDiffer>
    <experiments>6</experiments>
</comment>
<comment type="interaction">
    <interactant intactId="EBI-741694">
        <id>P49910</id>
    </interactant>
    <interactant intactId="EBI-707773">
        <id>P17028</id>
        <label>ZNF24</label>
    </interactant>
    <organismsDiffer>false</organismsDiffer>
    <experiments>3</experiments>
</comment>
<comment type="interaction">
    <interactant intactId="EBI-741694">
        <id>P49910</id>
    </interactant>
    <interactant intactId="EBI-10177272">
        <id>P15622-3</id>
        <label>ZNF250</label>
    </interactant>
    <organismsDiffer>false</organismsDiffer>
    <experiments>3</experiments>
</comment>
<comment type="interaction">
    <interactant intactId="EBI-741694">
        <id>P49910</id>
    </interactant>
    <interactant intactId="EBI-744493">
        <id>O14978</id>
        <label>ZNF263</label>
    </interactant>
    <organismsDiffer>false</organismsDiffer>
    <experiments>3</experiments>
</comment>
<comment type="interaction">
    <interactant intactId="EBI-741694">
        <id>P49910</id>
    </interactant>
    <interactant intactId="EBI-740727">
        <id>Q8TAU3</id>
        <label>ZNF417</label>
    </interactant>
    <organismsDiffer>false</organismsDiffer>
    <experiments>3</experiments>
</comment>
<comment type="interaction">
    <interactant intactId="EBI-741694">
        <id>P49910</id>
    </interactant>
    <interactant intactId="EBI-740232">
        <id>Q9NWS9-2</id>
        <label>ZNF446</label>
    </interactant>
    <organismsDiffer>false</organismsDiffer>
    <experiments>9</experiments>
</comment>
<comment type="interaction">
    <interactant intactId="EBI-741694">
        <id>P49910</id>
    </interactant>
    <interactant intactId="EBI-10172590">
        <id>Q7Z3I7</id>
        <label>ZNF572</label>
    </interactant>
    <organismsDiffer>false</organismsDiffer>
    <experiments>3</experiments>
</comment>
<comment type="interaction">
    <interactant intactId="EBI-741694">
        <id>P49910</id>
    </interactant>
    <interactant intactId="EBI-12817597">
        <id>Q96K58-2</id>
        <label>ZNF668</label>
    </interactant>
    <organismsDiffer>false</organismsDiffer>
    <experiments>3</experiments>
</comment>
<comment type="interaction">
    <interactant intactId="EBI-741694">
        <id>P49910</id>
    </interactant>
    <interactant intactId="EBI-10251462">
        <id>Q6NX45</id>
        <label>ZNF774</label>
    </interactant>
    <organismsDiffer>false</organismsDiffer>
    <experiments>3</experiments>
</comment>
<comment type="interaction">
    <interactant intactId="EBI-741694">
        <id>P49910</id>
    </interactant>
    <interactant intactId="EBI-11962574">
        <id>Q96EG3</id>
        <label>ZNF837</label>
    </interactant>
    <organismsDiffer>false</organismsDiffer>
    <experiments>3</experiments>
</comment>
<comment type="subcellular location">
    <subcellularLocation>
        <location evidence="2">Nucleus</location>
    </subcellularLocation>
</comment>
<comment type="tissue specificity">
    <text>Expressed specifically in testis.</text>
</comment>
<comment type="similarity">
    <text evidence="3">Belongs to the krueppel C2H2-type zinc-finger protein family.</text>
</comment>
<proteinExistence type="evidence at protein level"/>
<protein>
    <recommendedName>
        <fullName>Zinc finger protein 165</fullName>
    </recommendedName>
    <alternativeName>
        <fullName>Cancer/testis antigen 53</fullName>
        <shortName>CT53</shortName>
    </alternativeName>
    <alternativeName>
        <fullName>LD65</fullName>
    </alternativeName>
    <alternativeName>
        <fullName>Zinc finger and SCAN domain-containing protein 7</fullName>
    </alternativeName>
</protein>
<feature type="chain" id="PRO_0000047436" description="Zinc finger protein 165">
    <location>
        <begin position="1"/>
        <end position="485"/>
    </location>
</feature>
<feature type="domain" description="SCAN box" evidence="2">
    <location>
        <begin position="62"/>
        <end position="127"/>
    </location>
</feature>
<feature type="zinc finger region" description="C2H2-type 1; degenerate" evidence="1">
    <location>
        <begin position="290"/>
        <end position="314"/>
    </location>
</feature>
<feature type="zinc finger region" description="C2H2-type 2" evidence="1">
    <location>
        <begin position="344"/>
        <end position="366"/>
    </location>
</feature>
<feature type="zinc finger region" description="C2H2-type 3" evidence="1">
    <location>
        <begin position="372"/>
        <end position="394"/>
    </location>
</feature>
<feature type="zinc finger region" description="C2H2-type 4" evidence="1">
    <location>
        <begin position="400"/>
        <end position="422"/>
    </location>
</feature>
<feature type="zinc finger region" description="C2H2-type 5" evidence="1">
    <location>
        <begin position="428"/>
        <end position="450"/>
    </location>
</feature>
<feature type="zinc finger region" description="C2H2-type 6" evidence="1">
    <location>
        <begin position="456"/>
        <end position="478"/>
    </location>
</feature>
<feature type="cross-link" description="Glycyl lysine isopeptide (Lys-Gly) (interchain with G-Cter in SUMO2)" evidence="4">
    <location>
        <position position="23"/>
    </location>
</feature>
<feature type="cross-link" description="Glycyl lysine isopeptide (Lys-Gly) (interchain with G-Cter in SUMO2)" evidence="4">
    <location>
        <position position="162"/>
    </location>
</feature>
<feature type="cross-link" description="Glycyl lysine isopeptide (Lys-Gly) (interchain with G-Cter in SUMO2)" evidence="4">
    <location>
        <position position="195"/>
    </location>
</feature>
<accession>P49910</accession>
<reference key="1">
    <citation type="journal article" date="1995" name="Genomics">
        <title>Characterization of a novel zinc finger gene (ZNF165) mapping to 6p21 that is expressed specifically in testis.</title>
        <authorList>
            <person name="Tirosvoutis K.N."/>
            <person name="Divane A."/>
            <person name="Jones M."/>
            <person name="Affara N.A."/>
        </authorList>
    </citation>
    <scope>NUCLEOTIDE SEQUENCE [MRNA]</scope>
    <source>
        <tissue>Testis</tissue>
    </source>
</reference>
<reference key="2">
    <citation type="journal article" date="1997" name="Genomics">
        <title>Three genes encoding zinc finger proteins on human chromosome 6p21.3: members of a new subclass of the Kruppel gene family containing the conserved SCAN box domain.</title>
        <authorList>
            <person name="Lee P.L."/>
            <person name="Gelbart T."/>
            <person name="West C."/>
            <person name="Adams M."/>
            <person name="Blackstone R."/>
            <person name="Beutler E."/>
        </authorList>
    </citation>
    <scope>NUCLEOTIDE SEQUENCE [MRNA]</scope>
    <source>
        <tissue>Ovary</tissue>
    </source>
</reference>
<reference key="3">
    <citation type="journal article" date="2003" name="Nature">
        <title>The DNA sequence and analysis of human chromosome 6.</title>
        <authorList>
            <person name="Mungall A.J."/>
            <person name="Palmer S.A."/>
            <person name="Sims S.K."/>
            <person name="Edwards C.A."/>
            <person name="Ashurst J.L."/>
            <person name="Wilming L."/>
            <person name="Jones M.C."/>
            <person name="Horton R."/>
            <person name="Hunt S.E."/>
            <person name="Scott C.E."/>
            <person name="Gilbert J.G.R."/>
            <person name="Clamp M.E."/>
            <person name="Bethel G."/>
            <person name="Milne S."/>
            <person name="Ainscough R."/>
            <person name="Almeida J.P."/>
            <person name="Ambrose K.D."/>
            <person name="Andrews T.D."/>
            <person name="Ashwell R.I.S."/>
            <person name="Babbage A.K."/>
            <person name="Bagguley C.L."/>
            <person name="Bailey J."/>
            <person name="Banerjee R."/>
            <person name="Barker D.J."/>
            <person name="Barlow K.F."/>
            <person name="Bates K."/>
            <person name="Beare D.M."/>
            <person name="Beasley H."/>
            <person name="Beasley O."/>
            <person name="Bird C.P."/>
            <person name="Blakey S.E."/>
            <person name="Bray-Allen S."/>
            <person name="Brook J."/>
            <person name="Brown A.J."/>
            <person name="Brown J.Y."/>
            <person name="Burford D.C."/>
            <person name="Burrill W."/>
            <person name="Burton J."/>
            <person name="Carder C."/>
            <person name="Carter N.P."/>
            <person name="Chapman J.C."/>
            <person name="Clark S.Y."/>
            <person name="Clark G."/>
            <person name="Clee C.M."/>
            <person name="Clegg S."/>
            <person name="Cobley V."/>
            <person name="Collier R.E."/>
            <person name="Collins J.E."/>
            <person name="Colman L.K."/>
            <person name="Corby N.R."/>
            <person name="Coville G.J."/>
            <person name="Culley K.M."/>
            <person name="Dhami P."/>
            <person name="Davies J."/>
            <person name="Dunn M."/>
            <person name="Earthrowl M.E."/>
            <person name="Ellington A.E."/>
            <person name="Evans K.A."/>
            <person name="Faulkner L."/>
            <person name="Francis M.D."/>
            <person name="Frankish A."/>
            <person name="Frankland J."/>
            <person name="French L."/>
            <person name="Garner P."/>
            <person name="Garnett J."/>
            <person name="Ghori M.J."/>
            <person name="Gilby L.M."/>
            <person name="Gillson C.J."/>
            <person name="Glithero R.J."/>
            <person name="Grafham D.V."/>
            <person name="Grant M."/>
            <person name="Gribble S."/>
            <person name="Griffiths C."/>
            <person name="Griffiths M.N.D."/>
            <person name="Hall R."/>
            <person name="Halls K.S."/>
            <person name="Hammond S."/>
            <person name="Harley J.L."/>
            <person name="Hart E.A."/>
            <person name="Heath P.D."/>
            <person name="Heathcott R."/>
            <person name="Holmes S.J."/>
            <person name="Howden P.J."/>
            <person name="Howe K.L."/>
            <person name="Howell G.R."/>
            <person name="Huckle E."/>
            <person name="Humphray S.J."/>
            <person name="Humphries M.D."/>
            <person name="Hunt A.R."/>
            <person name="Johnson C.M."/>
            <person name="Joy A.A."/>
            <person name="Kay M."/>
            <person name="Keenan S.J."/>
            <person name="Kimberley A.M."/>
            <person name="King A."/>
            <person name="Laird G.K."/>
            <person name="Langford C."/>
            <person name="Lawlor S."/>
            <person name="Leongamornlert D.A."/>
            <person name="Leversha M."/>
            <person name="Lloyd C.R."/>
            <person name="Lloyd D.M."/>
            <person name="Loveland J.E."/>
            <person name="Lovell J."/>
            <person name="Martin S."/>
            <person name="Mashreghi-Mohammadi M."/>
            <person name="Maslen G.L."/>
            <person name="Matthews L."/>
            <person name="McCann O.T."/>
            <person name="McLaren S.J."/>
            <person name="McLay K."/>
            <person name="McMurray A."/>
            <person name="Moore M.J.F."/>
            <person name="Mullikin J.C."/>
            <person name="Niblett D."/>
            <person name="Nickerson T."/>
            <person name="Novik K.L."/>
            <person name="Oliver K."/>
            <person name="Overton-Larty E.K."/>
            <person name="Parker A."/>
            <person name="Patel R."/>
            <person name="Pearce A.V."/>
            <person name="Peck A.I."/>
            <person name="Phillimore B.J.C.T."/>
            <person name="Phillips S."/>
            <person name="Plumb R.W."/>
            <person name="Porter K.M."/>
            <person name="Ramsey Y."/>
            <person name="Ranby S.A."/>
            <person name="Rice C.M."/>
            <person name="Ross M.T."/>
            <person name="Searle S.M."/>
            <person name="Sehra H.K."/>
            <person name="Sheridan E."/>
            <person name="Skuce C.D."/>
            <person name="Smith S."/>
            <person name="Smith M."/>
            <person name="Spraggon L."/>
            <person name="Squares S.L."/>
            <person name="Steward C.A."/>
            <person name="Sycamore N."/>
            <person name="Tamlyn-Hall G."/>
            <person name="Tester J."/>
            <person name="Theaker A.J."/>
            <person name="Thomas D.W."/>
            <person name="Thorpe A."/>
            <person name="Tracey A."/>
            <person name="Tromans A."/>
            <person name="Tubby B."/>
            <person name="Wall M."/>
            <person name="Wallis J.M."/>
            <person name="West A.P."/>
            <person name="White S.S."/>
            <person name="Whitehead S.L."/>
            <person name="Whittaker H."/>
            <person name="Wild A."/>
            <person name="Willey D.J."/>
            <person name="Wilmer T.E."/>
            <person name="Wood J.M."/>
            <person name="Wray P.W."/>
            <person name="Wyatt J.C."/>
            <person name="Young L."/>
            <person name="Younger R.M."/>
            <person name="Bentley D.R."/>
            <person name="Coulson A."/>
            <person name="Durbin R.M."/>
            <person name="Hubbard T."/>
            <person name="Sulston J.E."/>
            <person name="Dunham I."/>
            <person name="Rogers J."/>
            <person name="Beck S."/>
        </authorList>
    </citation>
    <scope>NUCLEOTIDE SEQUENCE [LARGE SCALE GENOMIC DNA]</scope>
</reference>
<reference key="4">
    <citation type="journal article" date="2004" name="Genome Res.">
        <title>The status, quality, and expansion of the NIH full-length cDNA project: the Mammalian Gene Collection (MGC).</title>
        <authorList>
            <consortium name="The MGC Project Team"/>
        </authorList>
    </citation>
    <scope>NUCLEOTIDE SEQUENCE [LARGE SCALE MRNA]</scope>
    <source>
        <tissue>Testis</tissue>
    </source>
</reference>
<reference key="5">
    <citation type="journal article" date="2017" name="Nat. Struct. Mol. Biol.">
        <title>Site-specific mapping of the human SUMO proteome reveals co-modification with phosphorylation.</title>
        <authorList>
            <person name="Hendriks I.A."/>
            <person name="Lyon D."/>
            <person name="Young C."/>
            <person name="Jensen L.J."/>
            <person name="Vertegaal A.C."/>
            <person name="Nielsen M.L."/>
        </authorList>
    </citation>
    <scope>SUMOYLATION [LARGE SCALE ANALYSIS] AT LYS-23; LYS-162 AND LYS-195</scope>
    <scope>IDENTIFICATION BY MASS SPECTROMETRY [LARGE SCALE ANALYSIS]</scope>
</reference>
<gene>
    <name type="primary">ZNF165</name>
    <name type="synonym">ZPF165</name>
    <name type="synonym">ZSCAN7</name>
</gene>